<organism>
    <name type="scientific">Rattus norvegicus</name>
    <name type="common">Rat</name>
    <dbReference type="NCBI Taxonomy" id="10116"/>
    <lineage>
        <taxon>Eukaryota</taxon>
        <taxon>Metazoa</taxon>
        <taxon>Chordata</taxon>
        <taxon>Craniata</taxon>
        <taxon>Vertebrata</taxon>
        <taxon>Euteleostomi</taxon>
        <taxon>Mammalia</taxon>
        <taxon>Eutheria</taxon>
        <taxon>Euarchontoglires</taxon>
        <taxon>Glires</taxon>
        <taxon>Rodentia</taxon>
        <taxon>Myomorpha</taxon>
        <taxon>Muroidea</taxon>
        <taxon>Muridae</taxon>
        <taxon>Murinae</taxon>
        <taxon>Rattus</taxon>
    </lineage>
</organism>
<accession>P82252</accession>
<accession>Q4KM04</accession>
<comment type="function">
    <text evidence="1 3">Associates with SLC3A1 to form a functional transporter complex that mediates the electrogenic exchange between cationic amino acids and neutral amino acids, with a stoichiometry of 1:1 (By similarity) (PubMed:10506124). Has system b(0,+)-like activity with high affinity for extracellular cationic amino acids and L-cystine and lower affinity for intracellular neutral amino acids (By similarity). Substrate exchange is driven by high concentration of intracellular neutral amino acids and the intracellular reduction of L-cystine to L-cysteine (By similarity). Required for reabsorption of L-cystine and dibasic amino acids across the brush border membrane in renal proximal tubules (By similarity).</text>
</comment>
<comment type="catalytic activity">
    <reaction evidence="1">
        <text>L-leucine(out) + L-arginine(in) = L-leucine(in) + L-arginine(out)</text>
        <dbReference type="Rhea" id="RHEA:71059"/>
        <dbReference type="ChEBI" id="CHEBI:32682"/>
        <dbReference type="ChEBI" id="CHEBI:57427"/>
    </reaction>
    <physiologicalReaction direction="left-to-right" evidence="1">
        <dbReference type="Rhea" id="RHEA:71060"/>
    </physiologicalReaction>
</comment>
<comment type="catalytic activity">
    <reaction evidence="1">
        <text>L-histidine(out) + L-arginine(in) = L-histidine(in) + L-arginine(out)</text>
        <dbReference type="Rhea" id="RHEA:71063"/>
        <dbReference type="ChEBI" id="CHEBI:32682"/>
        <dbReference type="ChEBI" id="CHEBI:57595"/>
    </reaction>
    <physiologicalReaction direction="left-to-right" evidence="1">
        <dbReference type="Rhea" id="RHEA:71064"/>
    </physiologicalReaction>
</comment>
<comment type="catalytic activity">
    <reaction evidence="1">
        <text>L-arginine(in) + L-phenylalanine(out) = L-arginine(out) + L-phenylalanine(in)</text>
        <dbReference type="Rhea" id="RHEA:71067"/>
        <dbReference type="ChEBI" id="CHEBI:32682"/>
        <dbReference type="ChEBI" id="CHEBI:58095"/>
    </reaction>
    <physiologicalReaction direction="left-to-right" evidence="1">
        <dbReference type="Rhea" id="RHEA:71068"/>
    </physiologicalReaction>
</comment>
<comment type="catalytic activity">
    <reaction evidence="1">
        <text>L-cysteine(out) + L-arginine(in) = L-cysteine(in) + L-arginine(out)</text>
        <dbReference type="Rhea" id="RHEA:71071"/>
        <dbReference type="ChEBI" id="CHEBI:32682"/>
        <dbReference type="ChEBI" id="CHEBI:35235"/>
    </reaction>
    <physiologicalReaction direction="left-to-right" evidence="1">
        <dbReference type="Rhea" id="RHEA:71072"/>
    </physiologicalReaction>
</comment>
<comment type="catalytic activity">
    <reaction evidence="1">
        <text>L-cystine(out) + L-arginine(in) = L-cystine(in) + L-arginine(out)</text>
        <dbReference type="Rhea" id="RHEA:71075"/>
        <dbReference type="ChEBI" id="CHEBI:32682"/>
        <dbReference type="ChEBI" id="CHEBI:35491"/>
    </reaction>
    <physiologicalReaction direction="left-to-right" evidence="1">
        <dbReference type="Rhea" id="RHEA:71076"/>
    </physiologicalReaction>
</comment>
<comment type="catalytic activity">
    <reaction evidence="1">
        <text>L-lysine(out) + L-arginine(in) = L-lysine(in) + L-arginine(out)</text>
        <dbReference type="Rhea" id="RHEA:70827"/>
        <dbReference type="ChEBI" id="CHEBI:32551"/>
        <dbReference type="ChEBI" id="CHEBI:32682"/>
    </reaction>
    <physiologicalReaction direction="left-to-right" evidence="1">
        <dbReference type="Rhea" id="RHEA:70828"/>
    </physiologicalReaction>
</comment>
<comment type="subunit">
    <text evidence="1 3 4">Disulfide-linked heterodimer composed of the catalytic light chain subunit SLC7A9 and the heavy chain subunit SLC3A1. The heterodimer is the minimal functional unit. Assembles in heterotetramers (dimers of heterodimers) and higher order oligomers; the oligomerization is mediated by SLC3A1 likely to prevent degradation and facilitate heteromer trafficking to the plasma membrane (By similarity) (PubMed:10506124). Interacts with CAV1 (PubMed:16358225).</text>
</comment>
<comment type="subcellular location">
    <subcellularLocation>
        <location evidence="3 4">Apical cell membrane</location>
        <topology evidence="6 7">Multi-pass membrane protein</topology>
    </subcellularLocation>
</comment>
<comment type="tissue specificity">
    <text evidence="3 4">Outer medulla of kidney (at protein level). Kidney and small intestine. In the kidney localized to the apical membrane of the proximal tubules.</text>
</comment>
<comment type="similarity">
    <text evidence="5">Belongs to the amino acid-polyamine-organocation (APC) superfamily.</text>
</comment>
<sequence>MEETSPRRRREDEKSVHSTEPKTTSLQKEVGLLSGICIIVGTIIGSGIFISPKSVLANTESVGPCLIIWAACGVLATLGALCFAELGTMITKSGGEYPYLMEAFGPIPAYLFSWTSLIVMKPSSFAIICLSFSEYVCAAFYLGCRPPAVVVKLLAAAAILLITTVNALSVRLGSYVQNVFTAAKLVIVAIIIISGLVLLAQGNVKNFQNSFEGSQTSVGSISLAFYNGLWAYDGWNQLNYITEELRNPYRNLPMAIVIGIPLVTVCYILMNIAYFTVMTPTELLQSQAVAVTFGDRVLYPASWVVPLFVAFSTIGAANGTCFTAGRLIYVAGREGHMLKVLSYISVKRLTPAPALVFYGIIAIIYIIPGDINSLVNYFSFAAWLFYGMTILGLVVMRFTRKDLERPIKVPIFIPIIVILVSVFLILAPIISSPAWEYLYCVLFILSGLIFYFLFVHYKFRWAQKISRPITKHLQMLMEVVPPEKDPE</sequence>
<proteinExistence type="evidence at protein level"/>
<evidence type="ECO:0000250" key="1">
    <source>
        <dbReference type="UniProtKB" id="P82251"/>
    </source>
</evidence>
<evidence type="ECO:0000256" key="2">
    <source>
        <dbReference type="SAM" id="MobiDB-lite"/>
    </source>
</evidence>
<evidence type="ECO:0000269" key="3">
    <source>
    </source>
</evidence>
<evidence type="ECO:0000269" key="4">
    <source>
    </source>
</evidence>
<evidence type="ECO:0000305" key="5"/>
<evidence type="ECO:0000305" key="6">
    <source>
    </source>
</evidence>
<evidence type="ECO:0000305" key="7">
    <source>
    </source>
</evidence>
<evidence type="ECO:0007744" key="8">
    <source>
    </source>
</evidence>
<protein>
    <recommendedName>
        <fullName>b(0,+)-type amino acid transporter 1</fullName>
        <shortName>b(0,+)AT</shortName>
    </recommendedName>
    <alternativeName>
        <fullName>Glycoprotein-associated amino acid transporter b0,+AT1</fullName>
    </alternativeName>
    <alternativeName>
        <fullName>Solute carrier family 7 member 9</fullName>
    </alternativeName>
</protein>
<reference key="1">
    <citation type="journal article" date="1999" name="J. Biol. Chem.">
        <title>Identification of an amino acid transporter associated with the cystinuria-related type II membrane glycoprotein.</title>
        <authorList>
            <person name="Chairoungdua A."/>
            <person name="Segawa H."/>
            <person name="Kim J.Y."/>
            <person name="Miyamoto K."/>
            <person name="Haga H."/>
            <person name="Fukui Y."/>
            <person name="Mizoguchi K."/>
            <person name="Ito H."/>
            <person name="Takeda E."/>
            <person name="Endou H."/>
            <person name="Kanai Y."/>
        </authorList>
    </citation>
    <scope>NUCLEOTIDE SEQUENCE [MRNA]</scope>
    <scope>FUNCTION</scope>
    <scope>TISSUE SPECIFICITY</scope>
    <scope>SUBUNIT</scope>
    <scope>SUBCELLULAR LOCATION</scope>
    <source>
        <tissue>Kidney</tissue>
    </source>
</reference>
<reference key="2">
    <citation type="journal article" date="2004" name="Genome Res.">
        <title>The status, quality, and expansion of the NIH full-length cDNA project: the Mammalian Gene Collection (MGC).</title>
        <authorList>
            <consortium name="The MGC Project Team"/>
        </authorList>
    </citation>
    <scope>NUCLEOTIDE SEQUENCE [LARGE SCALE MRNA]</scope>
    <source>
        <tissue>Kidney</tissue>
    </source>
</reference>
<reference key="3">
    <citation type="journal article" date="2005" name="J. Nephrol.">
        <title>Co-localization and interaction of b0,+-type amino acid transporter 1 (BAT1) with caveolin-1 in rat kidney.</title>
        <authorList>
            <person name="Kwak J.O."/>
            <person name="Kim H.W."/>
            <person name="Jung S.M."/>
            <person name="Song J.H."/>
            <person name="Hong S.B."/>
            <person name="Oh K.J."/>
            <person name="Ko C.B."/>
            <person name="Cha S.H."/>
        </authorList>
    </citation>
    <scope>SUBCELLULAR LOCATION</scope>
    <scope>TISSUE SPECIFICITY</scope>
    <scope>INTERACTION WITH CAV1</scope>
</reference>
<reference key="4">
    <citation type="journal article" date="2012" name="Nat. Commun.">
        <title>Quantitative maps of protein phosphorylation sites across 14 different rat organs and tissues.</title>
        <authorList>
            <person name="Lundby A."/>
            <person name="Secher A."/>
            <person name="Lage K."/>
            <person name="Nordsborg N.B."/>
            <person name="Dmytriyev A."/>
            <person name="Lundby C."/>
            <person name="Olsen J.V."/>
        </authorList>
    </citation>
    <scope>PHOSPHORYLATION [LARGE SCALE ANALYSIS] AT SER-18</scope>
    <scope>IDENTIFICATION BY MASS SPECTROMETRY [LARGE SCALE ANALYSIS]</scope>
</reference>
<name>BAT1_RAT</name>
<feature type="chain" id="PRO_0000054260" description="b(0,+)-type amino acid transporter 1">
    <location>
        <begin position="1"/>
        <end position="487"/>
    </location>
</feature>
<feature type="topological domain" description="Cytoplasmic" evidence="5">
    <location>
        <begin position="1"/>
        <end position="31"/>
    </location>
</feature>
<feature type="transmembrane region" description="Helical" evidence="1">
    <location>
        <begin position="32"/>
        <end position="55"/>
    </location>
</feature>
<feature type="topological domain" description="Extracellular" evidence="5">
    <location>
        <begin position="56"/>
        <end position="62"/>
    </location>
</feature>
<feature type="transmembrane region" description="Helical" evidence="1">
    <location>
        <begin position="63"/>
        <end position="84"/>
    </location>
</feature>
<feature type="topological domain" description="Cytoplasmic" evidence="5">
    <location>
        <begin position="85"/>
        <end position="110"/>
    </location>
</feature>
<feature type="transmembrane region" description="Helical" evidence="1">
    <location>
        <begin position="111"/>
        <end position="137"/>
    </location>
</feature>
<feature type="topological domain" description="Extracellular" evidence="5">
    <location>
        <begin position="138"/>
        <end position="147"/>
    </location>
</feature>
<feature type="transmembrane region" description="Helical" evidence="1">
    <location>
        <begin position="148"/>
        <end position="169"/>
    </location>
</feature>
<feature type="transmembrane region" description="Helical" evidence="1">
    <location>
        <begin position="170"/>
        <end position="193"/>
    </location>
</feature>
<feature type="topological domain" description="Extracellular" evidence="5">
    <location>
        <begin position="194"/>
        <end position="217"/>
    </location>
</feature>
<feature type="transmembrane region" description="Helical" evidence="1">
    <location>
        <begin position="218"/>
        <end position="238"/>
    </location>
</feature>
<feature type="topological domain" description="Cytoplasmic" evidence="5">
    <location>
        <begin position="239"/>
        <end position="251"/>
    </location>
</feature>
<feature type="transmembrane region" description="Helical" evidence="1">
    <location>
        <begin position="252"/>
        <end position="274"/>
    </location>
</feature>
<feature type="topological domain" description="Extracellular" evidence="5">
    <location>
        <begin position="275"/>
        <end position="302"/>
    </location>
</feature>
<feature type="transmembrane region" description="Helical" evidence="1">
    <location>
        <begin position="303"/>
        <end position="325"/>
    </location>
</feature>
<feature type="topological domain" description="Cytoplasmic" evidence="5">
    <location>
        <begin position="326"/>
        <end position="351"/>
    </location>
</feature>
<feature type="transmembrane region" description="Helical" evidence="1">
    <location>
        <begin position="352"/>
        <end position="370"/>
    </location>
</feature>
<feature type="transmembrane region" description="Helical" evidence="1">
    <location>
        <begin position="371"/>
        <end position="391"/>
    </location>
</feature>
<feature type="topological domain" description="Cytoplasmic" evidence="5">
    <location>
        <begin position="392"/>
        <end position="410"/>
    </location>
</feature>
<feature type="transmembrane region" description="Helical" evidence="1">
    <location>
        <begin position="411"/>
        <end position="431"/>
    </location>
</feature>
<feature type="topological domain" description="Extracellular" evidence="5">
    <location>
        <begin position="432"/>
        <end position="434"/>
    </location>
</feature>
<feature type="transmembrane region" description="Helical" evidence="1">
    <location>
        <begin position="435"/>
        <end position="450"/>
    </location>
</feature>
<feature type="topological domain" description="Cytoplasmic" evidence="5">
    <location>
        <begin position="451"/>
        <end position="487"/>
    </location>
</feature>
<feature type="region of interest" description="Disordered" evidence="2">
    <location>
        <begin position="1"/>
        <end position="23"/>
    </location>
</feature>
<feature type="compositionally biased region" description="Basic and acidic residues" evidence="2">
    <location>
        <begin position="1"/>
        <end position="20"/>
    </location>
</feature>
<feature type="binding site" evidence="1">
    <location>
        <begin position="43"/>
        <end position="47"/>
    </location>
    <ligand>
        <name>L-arginine</name>
        <dbReference type="ChEBI" id="CHEBI:32682"/>
        <note>substrate</note>
    </ligand>
</feature>
<feature type="binding site" evidence="1">
    <location>
        <position position="233"/>
    </location>
    <ligand>
        <name>L-arginine</name>
        <dbReference type="ChEBI" id="CHEBI:32682"/>
        <note>substrate</note>
    </ligand>
</feature>
<feature type="modified residue" description="Phosphoserine" evidence="8">
    <location>
        <position position="18"/>
    </location>
</feature>
<feature type="disulfide bond" description="Interchain (with C-111 in SLC3A1)" evidence="1">
    <location>
        <position position="144"/>
    </location>
</feature>
<gene>
    <name type="primary">Slc7a9</name>
    <name type="synonym">Bat1</name>
</gene>
<keyword id="KW-0029">Amino-acid transport</keyword>
<keyword id="KW-1003">Cell membrane</keyword>
<keyword id="KW-1015">Disulfide bond</keyword>
<keyword id="KW-0472">Membrane</keyword>
<keyword id="KW-0597">Phosphoprotein</keyword>
<keyword id="KW-1185">Reference proteome</keyword>
<keyword id="KW-0812">Transmembrane</keyword>
<keyword id="KW-1133">Transmembrane helix</keyword>
<keyword id="KW-0813">Transport</keyword>
<dbReference type="EMBL" id="AB029559">
    <property type="protein sequence ID" value="BAA85186.1"/>
    <property type="molecule type" value="mRNA"/>
</dbReference>
<dbReference type="EMBL" id="BC098909">
    <property type="protein sequence ID" value="AAH98909.1"/>
    <property type="molecule type" value="mRNA"/>
</dbReference>
<dbReference type="RefSeq" id="NP_446381.1">
    <property type="nucleotide sequence ID" value="NM_053929.1"/>
</dbReference>
<dbReference type="RefSeq" id="XP_006228937.1">
    <property type="nucleotide sequence ID" value="XM_006228875.2"/>
</dbReference>
<dbReference type="RefSeq" id="XP_006228938.1">
    <property type="nucleotide sequence ID" value="XM_006228876.3"/>
</dbReference>
<dbReference type="RefSeq" id="XP_006228939.1">
    <property type="nucleotide sequence ID" value="XM_006228877.3"/>
</dbReference>
<dbReference type="RefSeq" id="XP_008757325.1">
    <property type="nucleotide sequence ID" value="XM_008759103.4"/>
</dbReference>
<dbReference type="RefSeq" id="XP_008757326.1">
    <property type="nucleotide sequence ID" value="XM_008759104.1"/>
</dbReference>
<dbReference type="RefSeq" id="XP_063122088.1">
    <property type="nucleotide sequence ID" value="XM_063266018.1"/>
</dbReference>
<dbReference type="SMR" id="P82252"/>
<dbReference type="FunCoup" id="P82252">
    <property type="interactions" value="111"/>
</dbReference>
<dbReference type="STRING" id="10116.ENSRNOP00000016919"/>
<dbReference type="TCDB" id="2.A.3.8.15">
    <property type="family name" value="the amino acid-polyamine-organocation (apc) family"/>
</dbReference>
<dbReference type="iPTMnet" id="P82252"/>
<dbReference type="PhosphoSitePlus" id="P82252"/>
<dbReference type="PaxDb" id="10116-ENSRNOP00000016919"/>
<dbReference type="Ensembl" id="ENSRNOT00000016919.5">
    <property type="protein sequence ID" value="ENSRNOP00000016919.2"/>
    <property type="gene ID" value="ENSRNOG00000012344.5"/>
</dbReference>
<dbReference type="GeneID" id="116726"/>
<dbReference type="KEGG" id="rno:116726"/>
<dbReference type="UCSC" id="RGD:619905">
    <property type="organism name" value="rat"/>
</dbReference>
<dbReference type="AGR" id="RGD:619905"/>
<dbReference type="CTD" id="11136"/>
<dbReference type="RGD" id="619905">
    <property type="gene designation" value="Slc7a9"/>
</dbReference>
<dbReference type="eggNOG" id="KOG1287">
    <property type="taxonomic scope" value="Eukaryota"/>
</dbReference>
<dbReference type="GeneTree" id="ENSGT00940000156370"/>
<dbReference type="HOGENOM" id="CLU_007946_3_0_1"/>
<dbReference type="InParanoid" id="P82252"/>
<dbReference type="OMA" id="TYWVISF"/>
<dbReference type="OrthoDB" id="5982228at2759"/>
<dbReference type="PhylomeDB" id="P82252"/>
<dbReference type="TreeFam" id="TF313355"/>
<dbReference type="Reactome" id="R-RNO-210991">
    <property type="pathway name" value="Basigin interactions"/>
</dbReference>
<dbReference type="Reactome" id="R-RNO-352230">
    <property type="pathway name" value="Amino acid transport across the plasma membrane"/>
</dbReference>
<dbReference type="PRO" id="PR:P82252"/>
<dbReference type="Proteomes" id="UP000002494">
    <property type="component" value="Chromosome 1"/>
</dbReference>
<dbReference type="Bgee" id="ENSRNOG00000012344">
    <property type="expression patterns" value="Expressed in jejunum and 10 other cell types or tissues"/>
</dbReference>
<dbReference type="GO" id="GO:0016324">
    <property type="term" value="C:apical plasma membrane"/>
    <property type="evidence" value="ECO:0000250"/>
    <property type="project" value="UniProtKB"/>
</dbReference>
<dbReference type="GO" id="GO:0031526">
    <property type="term" value="C:brush border membrane"/>
    <property type="evidence" value="ECO:0000250"/>
    <property type="project" value="UniProtKB"/>
</dbReference>
<dbReference type="GO" id="GO:0005886">
    <property type="term" value="C:plasma membrane"/>
    <property type="evidence" value="ECO:0000314"/>
    <property type="project" value="UniProtKB"/>
</dbReference>
<dbReference type="GO" id="GO:0015171">
    <property type="term" value="F:amino acid transmembrane transporter activity"/>
    <property type="evidence" value="ECO:0000314"/>
    <property type="project" value="RGD"/>
</dbReference>
<dbReference type="GO" id="GO:0015297">
    <property type="term" value="F:antiporter activity"/>
    <property type="evidence" value="ECO:0000266"/>
    <property type="project" value="RGD"/>
</dbReference>
<dbReference type="GO" id="GO:0180009">
    <property type="term" value="F:broad specificity neutral L-amino acid:basic L-amino acid antiporter activity"/>
    <property type="evidence" value="ECO:0000250"/>
    <property type="project" value="UniProtKB"/>
</dbReference>
<dbReference type="GO" id="GO:0015184">
    <property type="term" value="F:L-cystine transmembrane transporter activity"/>
    <property type="evidence" value="ECO:0000250"/>
    <property type="project" value="UniProtKB"/>
</dbReference>
<dbReference type="GO" id="GO:0015175">
    <property type="term" value="F:neutral L-amino acid transmembrane transporter activity"/>
    <property type="evidence" value="ECO:0000250"/>
    <property type="project" value="UniProtKB"/>
</dbReference>
<dbReference type="GO" id="GO:0042605">
    <property type="term" value="F:peptide antigen binding"/>
    <property type="evidence" value="ECO:0000250"/>
    <property type="project" value="UniProtKB"/>
</dbReference>
<dbReference type="GO" id="GO:0046982">
    <property type="term" value="F:protein heterodimerization activity"/>
    <property type="evidence" value="ECO:0000266"/>
    <property type="project" value="RGD"/>
</dbReference>
<dbReference type="GO" id="GO:0003333">
    <property type="term" value="P:amino acid transmembrane transport"/>
    <property type="evidence" value="ECO:0000318"/>
    <property type="project" value="GO_Central"/>
</dbReference>
<dbReference type="GO" id="GO:0006865">
    <property type="term" value="P:amino acid transport"/>
    <property type="evidence" value="ECO:0000314"/>
    <property type="project" value="RGD"/>
</dbReference>
<dbReference type="GO" id="GO:0015811">
    <property type="term" value="P:L-cystine transport"/>
    <property type="evidence" value="ECO:0000250"/>
    <property type="project" value="UniProtKB"/>
</dbReference>
<dbReference type="GO" id="GO:0015804">
    <property type="term" value="P:neutral amino acid transport"/>
    <property type="evidence" value="ECO:0000250"/>
    <property type="project" value="UniProtKB"/>
</dbReference>
<dbReference type="FunFam" id="1.20.1740.10:FF:000015">
    <property type="entry name" value="B(0,+)-type amino acid transporter 1"/>
    <property type="match status" value="1"/>
</dbReference>
<dbReference type="Gene3D" id="1.20.1740.10">
    <property type="entry name" value="Amino acid/polyamine transporter I"/>
    <property type="match status" value="1"/>
</dbReference>
<dbReference type="InterPro" id="IPR002293">
    <property type="entry name" value="AA/rel_permease1"/>
</dbReference>
<dbReference type="InterPro" id="IPR050598">
    <property type="entry name" value="AminoAcid_Transporter"/>
</dbReference>
<dbReference type="PANTHER" id="PTHR11785">
    <property type="entry name" value="AMINO ACID TRANSPORTER"/>
    <property type="match status" value="1"/>
</dbReference>
<dbReference type="PANTHER" id="PTHR11785:SF354">
    <property type="entry name" value="B(0,+)-TYPE AMINO ACID TRANSPORTER 1"/>
    <property type="match status" value="1"/>
</dbReference>
<dbReference type="Pfam" id="PF13520">
    <property type="entry name" value="AA_permease_2"/>
    <property type="match status" value="1"/>
</dbReference>
<dbReference type="PIRSF" id="PIRSF006060">
    <property type="entry name" value="AA_transporter"/>
    <property type="match status" value="1"/>
</dbReference>